<organism>
    <name type="scientific">Mustela putorius furo</name>
    <name type="common">European domestic ferret</name>
    <name type="synonym">Mustela furo</name>
    <dbReference type="NCBI Taxonomy" id="9669"/>
    <lineage>
        <taxon>Eukaryota</taxon>
        <taxon>Metazoa</taxon>
        <taxon>Chordata</taxon>
        <taxon>Craniata</taxon>
        <taxon>Vertebrata</taxon>
        <taxon>Euteleostomi</taxon>
        <taxon>Mammalia</taxon>
        <taxon>Eutheria</taxon>
        <taxon>Laurasiatheria</taxon>
        <taxon>Carnivora</taxon>
        <taxon>Caniformia</taxon>
        <taxon>Musteloidea</taxon>
        <taxon>Mustelidae</taxon>
        <taxon>Mustelinae</taxon>
        <taxon>Mustela</taxon>
    </lineage>
</organism>
<sequence length="178" mass="20586">MSGGKYVDSEGHLYTVPIREQGNIYKPNNKAMAEEINEKQVYDAHTKEIDLVNRDPKHLNDDVVKIDFEDVIAEPEGTHSFDGIWKASFTTFTVTKYWFYRLLSALFGIPMALIWGIYFAILSFLHIWAVVPCIKSFLIEIQCVSRVYSIYVHTFCDPFFEAVGKIFSSIRINMQKEI</sequence>
<dbReference type="EMBL" id="DP000183">
    <property type="protein sequence ID" value="ABI93651.1"/>
    <property type="molecule type" value="Genomic_DNA"/>
</dbReference>
<dbReference type="RefSeq" id="XP_004741976.1">
    <property type="nucleotide sequence ID" value="XM_004741919.3"/>
</dbReference>
<dbReference type="FunCoup" id="Q07E25">
    <property type="interactions" value="53"/>
</dbReference>
<dbReference type="STRING" id="9669.ENSMPUP00000007166"/>
<dbReference type="GeneID" id="101675955"/>
<dbReference type="KEGG" id="mpuf:101675955"/>
<dbReference type="CTD" id="857"/>
<dbReference type="eggNOG" id="ENOG502QUK5">
    <property type="taxonomic scope" value="Eukaryota"/>
</dbReference>
<dbReference type="HOGENOM" id="CLU_102582_0_0_1"/>
<dbReference type="InParanoid" id="Q07E25"/>
<dbReference type="OMA" id="MSGSKYV"/>
<dbReference type="OrthoDB" id="5917823at2759"/>
<dbReference type="Proteomes" id="UP000000715">
    <property type="component" value="Unplaced"/>
</dbReference>
<dbReference type="GO" id="GO:0002080">
    <property type="term" value="C:acrosomal membrane"/>
    <property type="evidence" value="ECO:0007669"/>
    <property type="project" value="Ensembl"/>
</dbReference>
<dbReference type="GO" id="GO:0005901">
    <property type="term" value="C:caveola"/>
    <property type="evidence" value="ECO:0000250"/>
    <property type="project" value="UniProtKB"/>
</dbReference>
<dbReference type="GO" id="GO:0002095">
    <property type="term" value="C:caveolar macromolecular signaling complex"/>
    <property type="evidence" value="ECO:0007669"/>
    <property type="project" value="Ensembl"/>
</dbReference>
<dbReference type="GO" id="GO:0005938">
    <property type="term" value="C:cell cortex"/>
    <property type="evidence" value="ECO:0007669"/>
    <property type="project" value="Ensembl"/>
</dbReference>
<dbReference type="GO" id="GO:0005929">
    <property type="term" value="C:cilium"/>
    <property type="evidence" value="ECO:0007669"/>
    <property type="project" value="Ensembl"/>
</dbReference>
<dbReference type="GO" id="GO:0005783">
    <property type="term" value="C:endoplasmic reticulum"/>
    <property type="evidence" value="ECO:0007669"/>
    <property type="project" value="Ensembl"/>
</dbReference>
<dbReference type="GO" id="GO:0005768">
    <property type="term" value="C:endosome"/>
    <property type="evidence" value="ECO:0000250"/>
    <property type="project" value="UniProtKB"/>
</dbReference>
<dbReference type="GO" id="GO:0005925">
    <property type="term" value="C:focal adhesion"/>
    <property type="evidence" value="ECO:0007669"/>
    <property type="project" value="Ensembl"/>
</dbReference>
<dbReference type="GO" id="GO:0000139">
    <property type="term" value="C:Golgi membrane"/>
    <property type="evidence" value="ECO:0007669"/>
    <property type="project" value="UniProtKB-SubCell"/>
</dbReference>
<dbReference type="GO" id="GO:0045121">
    <property type="term" value="C:membrane raft"/>
    <property type="evidence" value="ECO:0000250"/>
    <property type="project" value="UniProtKB"/>
</dbReference>
<dbReference type="GO" id="GO:0048471">
    <property type="term" value="C:perinuclear region of cytoplasm"/>
    <property type="evidence" value="ECO:0007669"/>
    <property type="project" value="Ensembl"/>
</dbReference>
<dbReference type="GO" id="GO:0042383">
    <property type="term" value="C:sarcolemma"/>
    <property type="evidence" value="ECO:0007669"/>
    <property type="project" value="TreeGrafter"/>
</dbReference>
<dbReference type="GO" id="GO:0051117">
    <property type="term" value="F:ATPase binding"/>
    <property type="evidence" value="ECO:0007669"/>
    <property type="project" value="Ensembl"/>
</dbReference>
<dbReference type="GO" id="GO:0042802">
    <property type="term" value="F:identical protein binding"/>
    <property type="evidence" value="ECO:0007669"/>
    <property type="project" value="Ensembl"/>
</dbReference>
<dbReference type="GO" id="GO:0070320">
    <property type="term" value="F:inward rectifier potassium channel inhibitor activity"/>
    <property type="evidence" value="ECO:0007669"/>
    <property type="project" value="Ensembl"/>
</dbReference>
<dbReference type="GO" id="GO:0050998">
    <property type="term" value="F:nitric-oxide synthase binding"/>
    <property type="evidence" value="ECO:0007669"/>
    <property type="project" value="Ensembl"/>
</dbReference>
<dbReference type="GO" id="GO:0008142">
    <property type="term" value="F:oxysterol binding"/>
    <property type="evidence" value="ECO:0000250"/>
    <property type="project" value="UniProtKB"/>
</dbReference>
<dbReference type="GO" id="GO:0016504">
    <property type="term" value="F:peptidase activator activity"/>
    <property type="evidence" value="ECO:0007669"/>
    <property type="project" value="Ensembl"/>
</dbReference>
<dbReference type="GO" id="GO:0046982">
    <property type="term" value="F:protein heterodimerization activity"/>
    <property type="evidence" value="ECO:0007669"/>
    <property type="project" value="Ensembl"/>
</dbReference>
<dbReference type="GO" id="GO:0019901">
    <property type="term" value="F:protein kinase binding"/>
    <property type="evidence" value="ECO:0007669"/>
    <property type="project" value="Ensembl"/>
</dbReference>
<dbReference type="GO" id="GO:0030292">
    <property type="term" value="F:protein tyrosine kinase inhibitor activity"/>
    <property type="evidence" value="ECO:0007669"/>
    <property type="project" value="Ensembl"/>
</dbReference>
<dbReference type="GO" id="GO:0044877">
    <property type="term" value="F:protein-containing complex binding"/>
    <property type="evidence" value="ECO:0007669"/>
    <property type="project" value="Ensembl"/>
</dbReference>
<dbReference type="GO" id="GO:0030674">
    <property type="term" value="F:protein-macromolecule adaptor activity"/>
    <property type="evidence" value="ECO:0007669"/>
    <property type="project" value="Ensembl"/>
</dbReference>
<dbReference type="GO" id="GO:0005102">
    <property type="term" value="F:signaling receptor binding"/>
    <property type="evidence" value="ECO:0007669"/>
    <property type="project" value="Ensembl"/>
</dbReference>
<dbReference type="GO" id="GO:0031267">
    <property type="term" value="F:small GTPase binding"/>
    <property type="evidence" value="ECO:0007669"/>
    <property type="project" value="Ensembl"/>
</dbReference>
<dbReference type="GO" id="GO:0044325">
    <property type="term" value="F:transmembrane transporter binding"/>
    <property type="evidence" value="ECO:0007669"/>
    <property type="project" value="Ensembl"/>
</dbReference>
<dbReference type="GO" id="GO:0001525">
    <property type="term" value="P:angiogenesis"/>
    <property type="evidence" value="ECO:0007669"/>
    <property type="project" value="Ensembl"/>
</dbReference>
<dbReference type="GO" id="GO:0038166">
    <property type="term" value="P:angiotensin-activated signaling pathway"/>
    <property type="evidence" value="ECO:0007669"/>
    <property type="project" value="Ensembl"/>
</dbReference>
<dbReference type="GO" id="GO:0097190">
    <property type="term" value="P:apoptotic signaling pathway"/>
    <property type="evidence" value="ECO:0007669"/>
    <property type="project" value="Ensembl"/>
</dbReference>
<dbReference type="GO" id="GO:0071711">
    <property type="term" value="P:basement membrane organization"/>
    <property type="evidence" value="ECO:0007669"/>
    <property type="project" value="Ensembl"/>
</dbReference>
<dbReference type="GO" id="GO:0006816">
    <property type="term" value="P:calcium ion transport"/>
    <property type="evidence" value="ECO:0007669"/>
    <property type="project" value="Ensembl"/>
</dbReference>
<dbReference type="GO" id="GO:0060070">
    <property type="term" value="P:canonical Wnt signaling pathway"/>
    <property type="evidence" value="ECO:0007669"/>
    <property type="project" value="Ensembl"/>
</dbReference>
<dbReference type="GO" id="GO:0070836">
    <property type="term" value="P:caveola assembly"/>
    <property type="evidence" value="ECO:0007669"/>
    <property type="project" value="Ensembl"/>
</dbReference>
<dbReference type="GO" id="GO:0072584">
    <property type="term" value="P:caveolin-mediated endocytosis"/>
    <property type="evidence" value="ECO:0007669"/>
    <property type="project" value="Ensembl"/>
</dbReference>
<dbReference type="GO" id="GO:0071360">
    <property type="term" value="P:cellular response to exogenous dsRNA"/>
    <property type="evidence" value="ECO:0007669"/>
    <property type="project" value="Ensembl"/>
</dbReference>
<dbReference type="GO" id="GO:0071455">
    <property type="term" value="P:cellular response to hyperoxia"/>
    <property type="evidence" value="ECO:0007669"/>
    <property type="project" value="Ensembl"/>
</dbReference>
<dbReference type="GO" id="GO:0071218">
    <property type="term" value="P:cellular response to misfolded protein"/>
    <property type="evidence" value="ECO:0007669"/>
    <property type="project" value="Ensembl"/>
</dbReference>
<dbReference type="GO" id="GO:0071560">
    <property type="term" value="P:cellular response to transforming growth factor beta stimulus"/>
    <property type="evidence" value="ECO:0007669"/>
    <property type="project" value="Ensembl"/>
</dbReference>
<dbReference type="GO" id="GO:0042632">
    <property type="term" value="P:cholesterol homeostasis"/>
    <property type="evidence" value="ECO:0007669"/>
    <property type="project" value="Ensembl"/>
</dbReference>
<dbReference type="GO" id="GO:0019221">
    <property type="term" value="P:cytokine-mediated signaling pathway"/>
    <property type="evidence" value="ECO:0007669"/>
    <property type="project" value="Ensembl"/>
</dbReference>
<dbReference type="GO" id="GO:0001935">
    <property type="term" value="P:endothelial cell proliferation"/>
    <property type="evidence" value="ECO:0007669"/>
    <property type="project" value="Ensembl"/>
</dbReference>
<dbReference type="GO" id="GO:0051649">
    <property type="term" value="P:establishment of localization in cell"/>
    <property type="evidence" value="ECO:0007669"/>
    <property type="project" value="Ensembl"/>
</dbReference>
<dbReference type="GO" id="GO:0048144">
    <property type="term" value="P:fibroblast proliferation"/>
    <property type="evidence" value="ECO:0007669"/>
    <property type="project" value="Ensembl"/>
</dbReference>
<dbReference type="GO" id="GO:0002067">
    <property type="term" value="P:glandular epithelial cell differentiation"/>
    <property type="evidence" value="ECO:0007669"/>
    <property type="project" value="Ensembl"/>
</dbReference>
<dbReference type="GO" id="GO:0038016">
    <property type="term" value="P:insulin receptor internalization"/>
    <property type="evidence" value="ECO:0007669"/>
    <property type="project" value="Ensembl"/>
</dbReference>
<dbReference type="GO" id="GO:0033484">
    <property type="term" value="P:intracellular nitric oxide homeostasis"/>
    <property type="evidence" value="ECO:0007669"/>
    <property type="project" value="Ensembl"/>
</dbReference>
<dbReference type="GO" id="GO:0007595">
    <property type="term" value="P:lactation"/>
    <property type="evidence" value="ECO:0007669"/>
    <property type="project" value="Ensembl"/>
</dbReference>
<dbReference type="GO" id="GO:0019915">
    <property type="term" value="P:lipid storage"/>
    <property type="evidence" value="ECO:0007669"/>
    <property type="project" value="Ensembl"/>
</dbReference>
<dbReference type="GO" id="GO:0060056">
    <property type="term" value="P:mammary gland involution"/>
    <property type="evidence" value="ECO:0007669"/>
    <property type="project" value="Ensembl"/>
</dbReference>
<dbReference type="GO" id="GO:0000165">
    <property type="term" value="P:MAPK cascade"/>
    <property type="evidence" value="ECO:0007669"/>
    <property type="project" value="Ensembl"/>
</dbReference>
<dbReference type="GO" id="GO:0051899">
    <property type="term" value="P:membrane depolarization"/>
    <property type="evidence" value="ECO:0007669"/>
    <property type="project" value="Ensembl"/>
</dbReference>
<dbReference type="GO" id="GO:0046716">
    <property type="term" value="P:muscle cell cellular homeostasis"/>
    <property type="evidence" value="ECO:0007669"/>
    <property type="project" value="Ensembl"/>
</dbReference>
<dbReference type="GO" id="GO:2000811">
    <property type="term" value="P:negative regulation of anoikis"/>
    <property type="evidence" value="ECO:0007669"/>
    <property type="project" value="Ensembl"/>
</dbReference>
<dbReference type="GO" id="GO:0090090">
    <property type="term" value="P:negative regulation of canonical Wnt signaling pathway"/>
    <property type="evidence" value="ECO:0007669"/>
    <property type="project" value="Ensembl"/>
</dbReference>
<dbReference type="GO" id="GO:0001960">
    <property type="term" value="P:negative regulation of cytokine-mediated signaling pathway"/>
    <property type="evidence" value="ECO:0007669"/>
    <property type="project" value="Ensembl"/>
</dbReference>
<dbReference type="GO" id="GO:0001937">
    <property type="term" value="P:negative regulation of endothelial cell proliferation"/>
    <property type="evidence" value="ECO:0007669"/>
    <property type="project" value="Ensembl"/>
</dbReference>
<dbReference type="GO" id="GO:0030857">
    <property type="term" value="P:negative regulation of epithelial cell differentiation"/>
    <property type="evidence" value="ECO:0007669"/>
    <property type="project" value="Ensembl"/>
</dbReference>
<dbReference type="GO" id="GO:0048147">
    <property type="term" value="P:negative regulation of fibroblast proliferation"/>
    <property type="evidence" value="ECO:0007669"/>
    <property type="project" value="Ensembl"/>
</dbReference>
<dbReference type="GO" id="GO:0043409">
    <property type="term" value="P:negative regulation of MAPK cascade"/>
    <property type="evidence" value="ECO:0007669"/>
    <property type="project" value="Ensembl"/>
</dbReference>
<dbReference type="GO" id="GO:0060546">
    <property type="term" value="P:negative regulation of necroptotic process"/>
    <property type="evidence" value="ECO:0007669"/>
    <property type="project" value="Ensembl"/>
</dbReference>
<dbReference type="GO" id="GO:0045019">
    <property type="term" value="P:negative regulation of nitric oxide biosynthetic process"/>
    <property type="evidence" value="ECO:0007669"/>
    <property type="project" value="Ensembl"/>
</dbReference>
<dbReference type="GO" id="GO:0048550">
    <property type="term" value="P:negative regulation of pinocytosis"/>
    <property type="evidence" value="ECO:0007669"/>
    <property type="project" value="Ensembl"/>
</dbReference>
<dbReference type="GO" id="GO:1901380">
    <property type="term" value="P:negative regulation of potassium ion transmembrane transport"/>
    <property type="evidence" value="ECO:0007669"/>
    <property type="project" value="Ensembl"/>
</dbReference>
<dbReference type="GO" id="GO:0031397">
    <property type="term" value="P:negative regulation of protein ubiquitination"/>
    <property type="evidence" value="ECO:0007669"/>
    <property type="project" value="Ensembl"/>
</dbReference>
<dbReference type="GO" id="GO:0046426">
    <property type="term" value="P:negative regulation of receptor signaling pathway via JAK-STAT"/>
    <property type="evidence" value="ECO:0007669"/>
    <property type="project" value="Ensembl"/>
</dbReference>
<dbReference type="GO" id="GO:0000122">
    <property type="term" value="P:negative regulation of transcription by RNA polymerase II"/>
    <property type="evidence" value="ECO:0007669"/>
    <property type="project" value="Ensembl"/>
</dbReference>
<dbReference type="GO" id="GO:0006809">
    <property type="term" value="P:nitric oxide biosynthetic process"/>
    <property type="evidence" value="ECO:0007669"/>
    <property type="project" value="Ensembl"/>
</dbReference>
<dbReference type="GO" id="GO:0010524">
    <property type="term" value="P:positive regulation of calcium ion transport into cytosol"/>
    <property type="evidence" value="ECO:0007669"/>
    <property type="project" value="Ensembl"/>
</dbReference>
<dbReference type="GO" id="GO:0043123">
    <property type="term" value="P:positive regulation of canonical NF-kappaB signal transduction"/>
    <property type="evidence" value="ECO:0007669"/>
    <property type="project" value="Ensembl"/>
</dbReference>
<dbReference type="GO" id="GO:0060355">
    <property type="term" value="P:positive regulation of cell adhesion molecule production"/>
    <property type="evidence" value="ECO:0007669"/>
    <property type="project" value="Ensembl"/>
</dbReference>
<dbReference type="GO" id="GO:0030335">
    <property type="term" value="P:positive regulation of cell migration"/>
    <property type="evidence" value="ECO:0007669"/>
    <property type="project" value="Ensembl"/>
</dbReference>
<dbReference type="GO" id="GO:0010875">
    <property type="term" value="P:positive regulation of cholesterol efflux"/>
    <property type="evidence" value="ECO:0007669"/>
    <property type="project" value="Ensembl"/>
</dbReference>
<dbReference type="GO" id="GO:0120162">
    <property type="term" value="P:positive regulation of cold-induced thermogenesis"/>
    <property type="evidence" value="ECO:0007669"/>
    <property type="project" value="Ensembl"/>
</dbReference>
<dbReference type="GO" id="GO:1904294">
    <property type="term" value="P:positive regulation of ERAD pathway"/>
    <property type="evidence" value="ECO:0007669"/>
    <property type="project" value="Ensembl"/>
</dbReference>
<dbReference type="GO" id="GO:2001238">
    <property type="term" value="P:positive regulation of extrinsic apoptotic signaling pathway"/>
    <property type="evidence" value="ECO:0007669"/>
    <property type="project" value="Ensembl"/>
</dbReference>
<dbReference type="GO" id="GO:1903598">
    <property type="term" value="P:positive regulation of gap junction assembly"/>
    <property type="evidence" value="ECO:0007669"/>
    <property type="project" value="Ensembl"/>
</dbReference>
<dbReference type="GO" id="GO:0010628">
    <property type="term" value="P:positive regulation of gene expression"/>
    <property type="evidence" value="ECO:0007669"/>
    <property type="project" value="Ensembl"/>
</dbReference>
<dbReference type="GO" id="GO:2001244">
    <property type="term" value="P:positive regulation of intrinsic apoptotic signaling pathway"/>
    <property type="evidence" value="ECO:0007669"/>
    <property type="project" value="Ensembl"/>
</dbReference>
<dbReference type="GO" id="GO:0031398">
    <property type="term" value="P:positive regulation of protein ubiquitination"/>
    <property type="evidence" value="ECO:0007669"/>
    <property type="project" value="Ensembl"/>
</dbReference>
<dbReference type="GO" id="GO:0034141">
    <property type="term" value="P:positive regulation of toll-like receptor 3 signaling pathway"/>
    <property type="evidence" value="ECO:0007669"/>
    <property type="project" value="Ensembl"/>
</dbReference>
<dbReference type="GO" id="GO:0045907">
    <property type="term" value="P:positive regulation of vasoconstriction"/>
    <property type="evidence" value="ECO:0007669"/>
    <property type="project" value="Ensembl"/>
</dbReference>
<dbReference type="GO" id="GO:0010608">
    <property type="term" value="P:post-transcriptional regulation of gene expression"/>
    <property type="evidence" value="ECO:0007669"/>
    <property type="project" value="Ensembl"/>
</dbReference>
<dbReference type="GO" id="GO:0015031">
    <property type="term" value="P:protein transport"/>
    <property type="evidence" value="ECO:0007669"/>
    <property type="project" value="Ensembl"/>
</dbReference>
<dbReference type="GO" id="GO:0031623">
    <property type="term" value="P:receptor internalization"/>
    <property type="evidence" value="ECO:0000250"/>
    <property type="project" value="UniProtKB"/>
</dbReference>
<dbReference type="GO" id="GO:0019065">
    <property type="term" value="P:receptor-mediated endocytosis of virus by host cell"/>
    <property type="evidence" value="ECO:0007669"/>
    <property type="project" value="Ensembl"/>
</dbReference>
<dbReference type="GO" id="GO:0030193">
    <property type="term" value="P:regulation of blood coagulation"/>
    <property type="evidence" value="ECO:0007669"/>
    <property type="project" value="Ensembl"/>
</dbReference>
<dbReference type="GO" id="GO:1901844">
    <property type="term" value="P:regulation of cell communication by electrical coupling involved in cardiac conduction"/>
    <property type="evidence" value="ECO:0007669"/>
    <property type="project" value="Ensembl"/>
</dbReference>
<dbReference type="GO" id="GO:0051480">
    <property type="term" value="P:regulation of cytosolic calcium ion concentration"/>
    <property type="evidence" value="ECO:0007669"/>
    <property type="project" value="Ensembl"/>
</dbReference>
<dbReference type="GO" id="GO:2000535">
    <property type="term" value="P:regulation of entry of bacterium into host cell"/>
    <property type="evidence" value="ECO:0007669"/>
    <property type="project" value="Ensembl"/>
</dbReference>
<dbReference type="GO" id="GO:0019217">
    <property type="term" value="P:regulation of fatty acid metabolic process"/>
    <property type="evidence" value="ECO:0007669"/>
    <property type="project" value="Ensembl"/>
</dbReference>
<dbReference type="GO" id="GO:0086091">
    <property type="term" value="P:regulation of heart rate by cardiac conduction"/>
    <property type="evidence" value="ECO:0007669"/>
    <property type="project" value="Ensembl"/>
</dbReference>
<dbReference type="GO" id="GO:0098903">
    <property type="term" value="P:regulation of membrane repolarization during action potential"/>
    <property type="evidence" value="ECO:0007669"/>
    <property type="project" value="Ensembl"/>
</dbReference>
<dbReference type="GO" id="GO:1900027">
    <property type="term" value="P:regulation of ruffle assembly"/>
    <property type="evidence" value="ECO:0007669"/>
    <property type="project" value="Ensembl"/>
</dbReference>
<dbReference type="GO" id="GO:0006940">
    <property type="term" value="P:regulation of smooth muscle contraction"/>
    <property type="evidence" value="ECO:0007669"/>
    <property type="project" value="Ensembl"/>
</dbReference>
<dbReference type="GO" id="GO:0003057">
    <property type="term" value="P:regulation of the force of heart contraction by chemical signal"/>
    <property type="evidence" value="ECO:0007669"/>
    <property type="project" value="Ensembl"/>
</dbReference>
<dbReference type="GO" id="GO:0098911">
    <property type="term" value="P:regulation of ventricular cardiac muscle cell action potential"/>
    <property type="evidence" value="ECO:0007669"/>
    <property type="project" value="Ensembl"/>
</dbReference>
<dbReference type="GO" id="GO:0009617">
    <property type="term" value="P:response to bacterium"/>
    <property type="evidence" value="ECO:0007669"/>
    <property type="project" value="Ensembl"/>
</dbReference>
<dbReference type="GO" id="GO:0051592">
    <property type="term" value="P:response to calcium ion"/>
    <property type="evidence" value="ECO:0007669"/>
    <property type="project" value="Ensembl"/>
</dbReference>
<dbReference type="GO" id="GO:0043627">
    <property type="term" value="P:response to estrogen"/>
    <property type="evidence" value="ECO:0007669"/>
    <property type="project" value="Ensembl"/>
</dbReference>
<dbReference type="GO" id="GO:0001666">
    <property type="term" value="P:response to hypoxia"/>
    <property type="evidence" value="ECO:0007669"/>
    <property type="project" value="Ensembl"/>
</dbReference>
<dbReference type="GO" id="GO:0002931">
    <property type="term" value="P:response to ischemia"/>
    <property type="evidence" value="ECO:0007669"/>
    <property type="project" value="Ensembl"/>
</dbReference>
<dbReference type="GO" id="GO:0032570">
    <property type="term" value="P:response to progesterone"/>
    <property type="evidence" value="ECO:0007669"/>
    <property type="project" value="Ensembl"/>
</dbReference>
<dbReference type="GO" id="GO:0007519">
    <property type="term" value="P:skeletal muscle tissue development"/>
    <property type="evidence" value="ECO:0007669"/>
    <property type="project" value="Ensembl"/>
</dbReference>
<dbReference type="GO" id="GO:0031295">
    <property type="term" value="P:T cell costimulation"/>
    <property type="evidence" value="ECO:0000250"/>
    <property type="project" value="UniProtKB"/>
</dbReference>
<dbReference type="GO" id="GO:0006641">
    <property type="term" value="P:triglyceride metabolic process"/>
    <property type="evidence" value="ECO:0007669"/>
    <property type="project" value="Ensembl"/>
</dbReference>
<dbReference type="GO" id="GO:0001570">
    <property type="term" value="P:vasculogenesis"/>
    <property type="evidence" value="ECO:0007669"/>
    <property type="project" value="Ensembl"/>
</dbReference>
<dbReference type="GO" id="GO:0042310">
    <property type="term" value="P:vasoconstriction"/>
    <property type="evidence" value="ECO:0007669"/>
    <property type="project" value="Ensembl"/>
</dbReference>
<dbReference type="InterPro" id="IPR001612">
    <property type="entry name" value="Caveolin"/>
</dbReference>
<dbReference type="InterPro" id="IPR018361">
    <property type="entry name" value="Caveolin_CS"/>
</dbReference>
<dbReference type="PANTHER" id="PTHR10844">
    <property type="entry name" value="CAVEOLIN"/>
    <property type="match status" value="1"/>
</dbReference>
<dbReference type="PANTHER" id="PTHR10844:SF18">
    <property type="entry name" value="CAVEOLIN-1"/>
    <property type="match status" value="1"/>
</dbReference>
<dbReference type="Pfam" id="PF01146">
    <property type="entry name" value="Caveolin"/>
    <property type="match status" value="1"/>
</dbReference>
<dbReference type="PROSITE" id="PS01210">
    <property type="entry name" value="CAVEOLIN"/>
    <property type="match status" value="1"/>
</dbReference>
<comment type="function">
    <text evidence="3 4">May act as a scaffolding protein within caveolar membranes. Forms a stable heterooligomeric complex with CAV2 that targets to lipid rafts and drives caveolae formation. Mediates the recruitment of CAVIN proteins (CAVIN1/2/3/4) to the caveolae (By similarity). Interacts directly with G-protein alpha subunits and can functionally regulate their activity (By similarity). Involved in the costimulatory signal essential for T-cell receptor (TCR)-mediated T-cell activation. Its binding to DPP4 induces T-cell proliferation and NF-kappa-B activation in a T-cell receptor/CD3-dependent manner (By similarity). Recruits CTNNB1 to caveolar membranes and may regulate CTNNB1-mediated signaling through the Wnt pathway (By similarity). Negatively regulates TGFB1-mediated activation of SMAD2/3 by mediating the internalization of TGFBR1 from membrane rafts leading to its subsequent degradation (By similarity). Binds 20(S)-hydroxycholesterol (20(S)-OHC) (By similarity).</text>
</comment>
<comment type="subunit">
    <text evidence="2 3 4 5">Homooligomer. Interacts with GLIPR2. Interacts with NOSTRIN (By similarity). Interacts with SNAP25 and STX1A (By similarity). Interacts (via the N-terminus) with DPP4; the interaction is direct (By similarity). Interacts with CTNNB1, CDH1 and JUP. Interacts with PACSIN2; this interaction induces membrane tubulation (By similarity). Interacts with SLC7A9 (By similarity). Interacts with BMX and BTK. Interacts with TGFBR1. Interacts with CAVIN3 (via leucine-zipper domain) in a cholesterol-sensitive manner. Interacts with CAVIN1. Interacts with EHD2 in a cholesterol-dependent manner. Forms a ternary complex with UBXN6 and VCP; mediates CAV1 targeting to lysosomes for degradation. Interacts with ABCG1; this interaction regulates ABCG1-mediated cholesterol efflux (By similarity). Interacts with NEU3; this interaction enhances NEU3 sialidase activity within caveola. Interacts (via C-terminus) with SPRY1, SPRY2 (via C-terminus), SPRY3, and SPRY4 (By similarity). Interacts with IGFBP5; this interaction allows trafficking of IGFBP5 from the plasma membrane to the nucleus (By similarity).</text>
</comment>
<comment type="subcellular location">
    <subcellularLocation>
        <location evidence="1">Golgi apparatus membrane</location>
        <topology evidence="1">Peripheral membrane protein</topology>
    </subcellularLocation>
    <subcellularLocation>
        <location evidence="1">Cell membrane</location>
        <topology evidence="1">Peripheral membrane protein</topology>
    </subcellularLocation>
    <subcellularLocation>
        <location evidence="3">Membrane</location>
        <location evidence="3">Caveola</location>
        <topology evidence="1">Peripheral membrane protein</topology>
    </subcellularLocation>
    <subcellularLocation>
        <location evidence="4">Membrane raft</location>
    </subcellularLocation>
    <text evidence="1">Colocalized with DPP4 in membrane rafts. Potential hairpin-like structure in the membrane. Membrane protein of caveolae (By similarity).</text>
</comment>
<comment type="PTM">
    <text evidence="4">Phosphorylated at Tyr-14 by ABL1 in response to oxidative stress.</text>
</comment>
<comment type="PTM">
    <text evidence="4">Ubiquitinated. Undergo monoubiquitination and multi- and/or polyubiquitination. Monoubiquitination of N-terminal lysines promotes integration in a ternary complex with UBXN6 and VCP which promotes oligomeric CAV1 targeting to lysosomes for degradation. Ubiquitinated by ZNRF1; leading to degradation and modulation of the TLR4-mediated immune response.</text>
</comment>
<comment type="similarity">
    <text evidence="7">Belongs to the caveolin family.</text>
</comment>
<gene>
    <name type="primary">CAV1</name>
</gene>
<accession>Q07E25</accession>
<proteinExistence type="inferred from homology"/>
<protein>
    <recommendedName>
        <fullName>Caveolin-1</fullName>
    </recommendedName>
</protein>
<keyword id="KW-0007">Acetylation</keyword>
<keyword id="KW-1003">Cell membrane</keyword>
<keyword id="KW-0333">Golgi apparatus</keyword>
<keyword id="KW-1017">Isopeptide bond</keyword>
<keyword id="KW-0449">Lipoprotein</keyword>
<keyword id="KW-0472">Membrane</keyword>
<keyword id="KW-0564">Palmitate</keyword>
<keyword id="KW-0597">Phosphoprotein</keyword>
<keyword id="KW-1185">Reference proteome</keyword>
<keyword id="KW-0832">Ubl conjugation</keyword>
<evidence type="ECO:0000250" key="1"/>
<evidence type="ECO:0000250" key="2">
    <source>
        <dbReference type="UniProtKB" id="P41350"/>
    </source>
</evidence>
<evidence type="ECO:0000250" key="3">
    <source>
        <dbReference type="UniProtKB" id="P49817"/>
    </source>
</evidence>
<evidence type="ECO:0000250" key="4">
    <source>
        <dbReference type="UniProtKB" id="Q03135"/>
    </source>
</evidence>
<evidence type="ECO:0000250" key="5">
    <source>
        <dbReference type="UniProtKB" id="Q2IBA5"/>
    </source>
</evidence>
<evidence type="ECO:0000255" key="6"/>
<evidence type="ECO:0000305" key="7"/>
<feature type="initiator methionine" description="Removed" evidence="4">
    <location>
        <position position="1"/>
    </location>
</feature>
<feature type="chain" id="PRO_0000260370" description="Caveolin-1">
    <location>
        <begin position="2"/>
        <end position="178"/>
    </location>
</feature>
<feature type="topological domain" description="Cytoplasmic" evidence="6">
    <location>
        <begin position="2"/>
        <end position="104"/>
    </location>
</feature>
<feature type="intramembrane region" description="Helical" evidence="6">
    <location>
        <begin position="105"/>
        <end position="125"/>
    </location>
</feature>
<feature type="topological domain" description="Cytoplasmic" evidence="6">
    <location>
        <begin position="126"/>
        <end position="178"/>
    </location>
</feature>
<feature type="region of interest" description="Required for homooligomerization" evidence="4">
    <location>
        <begin position="2"/>
        <end position="94"/>
    </location>
</feature>
<feature type="region of interest" description="Interaction with CAVIN3" evidence="4">
    <location>
        <begin position="82"/>
        <end position="94"/>
    </location>
</feature>
<feature type="region of interest" description="Interacts with SPRY1, SPRY2, SPRY3 and SPRY4" evidence="3">
    <location>
        <begin position="131"/>
        <end position="142"/>
    </location>
</feature>
<feature type="region of interest" description="Interacts with SPRY1, SPRY2, and SPRY4" evidence="3">
    <location>
        <begin position="149"/>
        <end position="160"/>
    </location>
</feature>
<feature type="region of interest" description="Interacts with SPRY1, SPRY2, SPRY3 and SPRY4" evidence="3">
    <location>
        <begin position="167"/>
        <end position="178"/>
    </location>
</feature>
<feature type="modified residue" description="N-acetylserine" evidence="4">
    <location>
        <position position="2"/>
    </location>
</feature>
<feature type="modified residue" description="Phosphoserine" evidence="2">
    <location>
        <position position="2"/>
    </location>
</feature>
<feature type="modified residue" description="N6-acetyllysine; alternate" evidence="4">
    <location>
        <position position="5"/>
    </location>
</feature>
<feature type="modified residue" description="Phosphotyrosine" evidence="4">
    <location>
        <position position="6"/>
    </location>
</feature>
<feature type="modified residue" description="Phosphoserine" evidence="3">
    <location>
        <position position="9"/>
    </location>
</feature>
<feature type="modified residue" description="Phosphotyrosine; by ABL1" evidence="3">
    <location>
        <position position="14"/>
    </location>
</feature>
<feature type="modified residue" description="Phosphotyrosine" evidence="4">
    <location>
        <position position="25"/>
    </location>
</feature>
<feature type="lipid moiety-binding region" description="S-palmitoyl cysteine" evidence="1">
    <location>
        <position position="133"/>
    </location>
</feature>
<feature type="lipid moiety-binding region" description="S-palmitoyl cysteine" evidence="1">
    <location>
        <position position="143"/>
    </location>
</feature>
<feature type="lipid moiety-binding region" description="S-palmitoyl cysteine" evidence="1">
    <location>
        <position position="156"/>
    </location>
</feature>
<feature type="cross-link" description="Glycyl lysine isopeptide (Lys-Gly) (interchain with G-Cter in ubiquitin); alternate" evidence="4">
    <location>
        <position position="5"/>
    </location>
</feature>
<feature type="cross-link" description="Glycyl lysine isopeptide (Lys-Gly) (interchain with G-Cter in ubiquitin)" evidence="4">
    <location>
        <position position="26"/>
    </location>
</feature>
<feature type="cross-link" description="Glycyl lysine isopeptide (Lys-Gly) (interchain with G-Cter in ubiquitin)" evidence="4">
    <location>
        <position position="30"/>
    </location>
</feature>
<feature type="cross-link" description="Glycyl lysine isopeptide (Lys-Gly) (interchain with G-Cter in ubiquitin)" evidence="4">
    <location>
        <position position="39"/>
    </location>
</feature>
<feature type="cross-link" description="Glycyl lysine isopeptide (Lys-Gly) (interchain with G-Cter in ubiquitin)" evidence="4">
    <location>
        <position position="47"/>
    </location>
</feature>
<feature type="cross-link" description="Glycyl lysine isopeptide (Lys-Gly) (interchain with G-Cter in ubiquitin)" evidence="4">
    <location>
        <position position="57"/>
    </location>
</feature>
<reference key="1">
    <citation type="submission" date="2006-09" db="EMBL/GenBank/DDBJ databases">
        <title>NISC comparative sequencing initiative.</title>
        <authorList>
            <person name="Antonellis A."/>
            <person name="Ayele K."/>
            <person name="Benjamin B."/>
            <person name="Blakesley R.W."/>
            <person name="Boakye A."/>
            <person name="Bouffard G.G."/>
            <person name="Brinkley C."/>
            <person name="Brooks S."/>
            <person name="Chu G."/>
            <person name="Coleman H."/>
            <person name="Engle J."/>
            <person name="Gestole M."/>
            <person name="Greene A."/>
            <person name="Guan X."/>
            <person name="Gupta J."/>
            <person name="Haghighi P."/>
            <person name="Han J."/>
            <person name="Hansen N."/>
            <person name="Ho S.-L."/>
            <person name="Hu P."/>
            <person name="Hunter G."/>
            <person name="Hurle B."/>
            <person name="Idol J.R."/>
            <person name="Kwong P."/>
            <person name="Laric P."/>
            <person name="Larson S."/>
            <person name="Lee-Lin S.-Q."/>
            <person name="Legaspi R."/>
            <person name="Madden M."/>
            <person name="Maduro Q.L."/>
            <person name="Maduro V.B."/>
            <person name="Margulies E.H."/>
            <person name="Masiello C."/>
            <person name="Maskeri B."/>
            <person name="McDowell J."/>
            <person name="Mojidi H.A."/>
            <person name="Mullikin J.C."/>
            <person name="Oestreicher J.S."/>
            <person name="Park M."/>
            <person name="Portnoy M.E."/>
            <person name="Prasad A."/>
            <person name="Puri O."/>
            <person name="Reddix-Dugue N."/>
            <person name="Schandler K."/>
            <person name="Schueler M.G."/>
            <person name="Sison C."/>
            <person name="Stantripop S."/>
            <person name="Stephen E."/>
            <person name="Taye A."/>
            <person name="Thomas J.W."/>
            <person name="Thomas P.J."/>
            <person name="Tsipouri V."/>
            <person name="Ung L."/>
            <person name="Vogt J.L."/>
            <person name="Wetherby K.D."/>
            <person name="Young A."/>
            <person name="Green E.D."/>
        </authorList>
    </citation>
    <scope>NUCLEOTIDE SEQUENCE [LARGE SCALE GENOMIC DNA]</scope>
</reference>
<name>CAV1_MUSPF</name>